<comment type="function">
    <text evidence="2">GTP hydrolase that promotes the GTP-dependent binding of aminoacyl-tRNA to the A-site of ribosomes during protein biosynthesis.</text>
</comment>
<comment type="catalytic activity">
    <reaction evidence="2">
        <text>GTP + H2O = GDP + phosphate + H(+)</text>
        <dbReference type="Rhea" id="RHEA:19669"/>
        <dbReference type="ChEBI" id="CHEBI:15377"/>
        <dbReference type="ChEBI" id="CHEBI:15378"/>
        <dbReference type="ChEBI" id="CHEBI:37565"/>
        <dbReference type="ChEBI" id="CHEBI:43474"/>
        <dbReference type="ChEBI" id="CHEBI:58189"/>
        <dbReference type="EC" id="3.6.5.3"/>
    </reaction>
    <physiologicalReaction direction="left-to-right" evidence="2">
        <dbReference type="Rhea" id="RHEA:19670"/>
    </physiologicalReaction>
</comment>
<comment type="subcellular location">
    <subcellularLocation>
        <location evidence="2">Cytoplasm</location>
    </subcellularLocation>
</comment>
<comment type="similarity">
    <text evidence="2">Belongs to the TRAFAC class translation factor GTPase superfamily. Classic translation factor GTPase family. EF-Tu/EF-1A subfamily.</text>
</comment>
<accession>A4FWE9</accession>
<organism>
    <name type="scientific">Methanococcus maripaludis (strain C5 / ATCC BAA-1333)</name>
    <dbReference type="NCBI Taxonomy" id="402880"/>
    <lineage>
        <taxon>Archaea</taxon>
        <taxon>Methanobacteriati</taxon>
        <taxon>Methanobacteriota</taxon>
        <taxon>Methanomada group</taxon>
        <taxon>Methanococci</taxon>
        <taxon>Methanococcales</taxon>
        <taxon>Methanococcaceae</taxon>
        <taxon>Methanococcus</taxon>
    </lineage>
</organism>
<evidence type="ECO:0000250" key="1"/>
<evidence type="ECO:0000255" key="2">
    <source>
        <dbReference type="HAMAP-Rule" id="MF_00118"/>
    </source>
</evidence>
<name>EF1A_METM5</name>
<gene>
    <name evidence="2" type="primary">tuf</name>
    <name type="ordered locus">MmarC5_0208</name>
</gene>
<keyword id="KW-0963">Cytoplasm</keyword>
<keyword id="KW-0251">Elongation factor</keyword>
<keyword id="KW-0342">GTP-binding</keyword>
<keyword id="KW-0378">Hydrolase</keyword>
<keyword id="KW-0460">Magnesium</keyword>
<keyword id="KW-0479">Metal-binding</keyword>
<keyword id="KW-0547">Nucleotide-binding</keyword>
<keyword id="KW-0648">Protein biosynthesis</keyword>
<feature type="chain" id="PRO_1000015690" description="Elongation factor 1-alpha">
    <location>
        <begin position="1"/>
        <end position="428"/>
    </location>
</feature>
<feature type="domain" description="tr-type G">
    <location>
        <begin position="5"/>
        <end position="225"/>
    </location>
</feature>
<feature type="region of interest" description="G1" evidence="1">
    <location>
        <begin position="14"/>
        <end position="21"/>
    </location>
</feature>
<feature type="region of interest" description="G2" evidence="1">
    <location>
        <begin position="70"/>
        <end position="74"/>
    </location>
</feature>
<feature type="region of interest" description="G3" evidence="1">
    <location>
        <begin position="91"/>
        <end position="94"/>
    </location>
</feature>
<feature type="region of interest" description="G4" evidence="1">
    <location>
        <begin position="149"/>
        <end position="152"/>
    </location>
</feature>
<feature type="region of interest" description="G5" evidence="1">
    <location>
        <begin position="189"/>
        <end position="191"/>
    </location>
</feature>
<feature type="binding site" evidence="2">
    <location>
        <begin position="14"/>
        <end position="21"/>
    </location>
    <ligand>
        <name>GTP</name>
        <dbReference type="ChEBI" id="CHEBI:37565"/>
    </ligand>
</feature>
<feature type="binding site" evidence="2">
    <location>
        <position position="21"/>
    </location>
    <ligand>
        <name>Mg(2+)</name>
        <dbReference type="ChEBI" id="CHEBI:18420"/>
    </ligand>
</feature>
<feature type="binding site" evidence="2">
    <location>
        <begin position="91"/>
        <end position="95"/>
    </location>
    <ligand>
        <name>GTP</name>
        <dbReference type="ChEBI" id="CHEBI:37565"/>
    </ligand>
</feature>
<feature type="binding site" evidence="2">
    <location>
        <begin position="149"/>
        <end position="152"/>
    </location>
    <ligand>
        <name>GTP</name>
        <dbReference type="ChEBI" id="CHEBI:37565"/>
    </ligand>
</feature>
<dbReference type="EC" id="3.6.5.3" evidence="2"/>
<dbReference type="EMBL" id="CP000609">
    <property type="protein sequence ID" value="ABO34524.1"/>
    <property type="molecule type" value="Genomic_DNA"/>
</dbReference>
<dbReference type="RefSeq" id="WP_011867982.1">
    <property type="nucleotide sequence ID" value="NC_009135.1"/>
</dbReference>
<dbReference type="SMR" id="A4FWE9"/>
<dbReference type="STRING" id="402880.MmarC5_0208"/>
<dbReference type="GeneID" id="4928296"/>
<dbReference type="KEGG" id="mmq:MmarC5_0208"/>
<dbReference type="eggNOG" id="arCOG01561">
    <property type="taxonomic scope" value="Archaea"/>
</dbReference>
<dbReference type="HOGENOM" id="CLU_007265_3_5_2"/>
<dbReference type="OrthoDB" id="371718at2157"/>
<dbReference type="Proteomes" id="UP000000253">
    <property type="component" value="Chromosome"/>
</dbReference>
<dbReference type="GO" id="GO:0005737">
    <property type="term" value="C:cytoplasm"/>
    <property type="evidence" value="ECO:0007669"/>
    <property type="project" value="UniProtKB-SubCell"/>
</dbReference>
<dbReference type="GO" id="GO:0005525">
    <property type="term" value="F:GTP binding"/>
    <property type="evidence" value="ECO:0007669"/>
    <property type="project" value="UniProtKB-UniRule"/>
</dbReference>
<dbReference type="GO" id="GO:0003924">
    <property type="term" value="F:GTPase activity"/>
    <property type="evidence" value="ECO:0007669"/>
    <property type="project" value="InterPro"/>
</dbReference>
<dbReference type="GO" id="GO:0003746">
    <property type="term" value="F:translation elongation factor activity"/>
    <property type="evidence" value="ECO:0007669"/>
    <property type="project" value="UniProtKB-UniRule"/>
</dbReference>
<dbReference type="CDD" id="cd01883">
    <property type="entry name" value="EF1_alpha"/>
    <property type="match status" value="1"/>
</dbReference>
<dbReference type="CDD" id="cd03693">
    <property type="entry name" value="EF1_alpha_II"/>
    <property type="match status" value="1"/>
</dbReference>
<dbReference type="CDD" id="cd03705">
    <property type="entry name" value="EF1_alpha_III"/>
    <property type="match status" value="1"/>
</dbReference>
<dbReference type="FunFam" id="2.40.30.10:FF:000003">
    <property type="entry name" value="Elongation factor 1-alpha"/>
    <property type="match status" value="1"/>
</dbReference>
<dbReference type="FunFam" id="2.40.30.10:FF:000005">
    <property type="entry name" value="Elongation factor 1-alpha"/>
    <property type="match status" value="1"/>
</dbReference>
<dbReference type="Gene3D" id="3.40.50.300">
    <property type="entry name" value="P-loop containing nucleotide triphosphate hydrolases"/>
    <property type="match status" value="1"/>
</dbReference>
<dbReference type="Gene3D" id="2.40.30.10">
    <property type="entry name" value="Translation factors"/>
    <property type="match status" value="2"/>
</dbReference>
<dbReference type="HAMAP" id="MF_00118_A">
    <property type="entry name" value="EF_Tu_A"/>
    <property type="match status" value="1"/>
</dbReference>
<dbReference type="InterPro" id="IPR004161">
    <property type="entry name" value="EFTu-like_2"/>
</dbReference>
<dbReference type="InterPro" id="IPR029459">
    <property type="entry name" value="EFTU-type"/>
</dbReference>
<dbReference type="InterPro" id="IPR031157">
    <property type="entry name" value="G_TR_CS"/>
</dbReference>
<dbReference type="InterPro" id="IPR054696">
    <property type="entry name" value="GTP-eEF1A_C"/>
</dbReference>
<dbReference type="InterPro" id="IPR027417">
    <property type="entry name" value="P-loop_NTPase"/>
</dbReference>
<dbReference type="InterPro" id="IPR005225">
    <property type="entry name" value="Small_GTP-bd"/>
</dbReference>
<dbReference type="InterPro" id="IPR000795">
    <property type="entry name" value="T_Tr_GTP-bd_dom"/>
</dbReference>
<dbReference type="InterPro" id="IPR050100">
    <property type="entry name" value="TRAFAC_GTPase_members"/>
</dbReference>
<dbReference type="InterPro" id="IPR009000">
    <property type="entry name" value="Transl_B-barrel_sf"/>
</dbReference>
<dbReference type="InterPro" id="IPR009001">
    <property type="entry name" value="Transl_elong_EF1A/Init_IF2_C"/>
</dbReference>
<dbReference type="InterPro" id="IPR004539">
    <property type="entry name" value="Transl_elong_EF1A_euk/arc"/>
</dbReference>
<dbReference type="NCBIfam" id="TIGR00483">
    <property type="entry name" value="EF-1_alpha"/>
    <property type="match status" value="1"/>
</dbReference>
<dbReference type="NCBIfam" id="NF008969">
    <property type="entry name" value="PRK12317.1"/>
    <property type="match status" value="1"/>
</dbReference>
<dbReference type="NCBIfam" id="TIGR00231">
    <property type="entry name" value="small_GTP"/>
    <property type="match status" value="1"/>
</dbReference>
<dbReference type="PANTHER" id="PTHR23115">
    <property type="entry name" value="TRANSLATION FACTOR"/>
    <property type="match status" value="1"/>
</dbReference>
<dbReference type="Pfam" id="PF22594">
    <property type="entry name" value="GTP-eEF1A_C"/>
    <property type="match status" value="1"/>
</dbReference>
<dbReference type="Pfam" id="PF00009">
    <property type="entry name" value="GTP_EFTU"/>
    <property type="match status" value="1"/>
</dbReference>
<dbReference type="Pfam" id="PF03144">
    <property type="entry name" value="GTP_EFTU_D2"/>
    <property type="match status" value="1"/>
</dbReference>
<dbReference type="Pfam" id="PF14578">
    <property type="entry name" value="GTP_EFTU_D4"/>
    <property type="match status" value="1"/>
</dbReference>
<dbReference type="PRINTS" id="PR00315">
    <property type="entry name" value="ELONGATNFCT"/>
</dbReference>
<dbReference type="SUPFAM" id="SSF50465">
    <property type="entry name" value="EF-Tu/eEF-1alpha/eIF2-gamma C-terminal domain"/>
    <property type="match status" value="1"/>
</dbReference>
<dbReference type="SUPFAM" id="SSF52540">
    <property type="entry name" value="P-loop containing nucleoside triphosphate hydrolases"/>
    <property type="match status" value="1"/>
</dbReference>
<dbReference type="SUPFAM" id="SSF50447">
    <property type="entry name" value="Translation proteins"/>
    <property type="match status" value="1"/>
</dbReference>
<dbReference type="PROSITE" id="PS00301">
    <property type="entry name" value="G_TR_1"/>
    <property type="match status" value="1"/>
</dbReference>
<dbReference type="PROSITE" id="PS51722">
    <property type="entry name" value="G_TR_2"/>
    <property type="match status" value="1"/>
</dbReference>
<reference key="1">
    <citation type="submission" date="2007-03" db="EMBL/GenBank/DDBJ databases">
        <title>Complete sequence of chromosome of Methanococcus maripaludis C5.</title>
        <authorList>
            <consortium name="US DOE Joint Genome Institute"/>
            <person name="Copeland A."/>
            <person name="Lucas S."/>
            <person name="Lapidus A."/>
            <person name="Barry K."/>
            <person name="Glavina del Rio T."/>
            <person name="Dalin E."/>
            <person name="Tice H."/>
            <person name="Pitluck S."/>
            <person name="Chertkov O."/>
            <person name="Brettin T."/>
            <person name="Bruce D."/>
            <person name="Han C."/>
            <person name="Detter J.C."/>
            <person name="Schmutz J."/>
            <person name="Larimer F."/>
            <person name="Land M."/>
            <person name="Hauser L."/>
            <person name="Kyrpides N."/>
            <person name="Mikhailova N."/>
            <person name="Sieprawska-Lupa M."/>
            <person name="Whitman W.B."/>
            <person name="Richardson P."/>
        </authorList>
    </citation>
    <scope>NUCLEOTIDE SEQUENCE [LARGE SCALE GENOMIC DNA]</scope>
    <source>
        <strain>C5 / ATCC BAA-1333</strain>
    </source>
</reference>
<proteinExistence type="inferred from homology"/>
<sequence>MAKEKPILNVAFIGHVDAGKSTTVGRLLLDGGAIDPQLIVRLKKEAEEKGKAGFEFAYVMDGLKEERERGVTIDVAHKKFPTAKYEVTIVDCPGHRDFIKNMITGASQADAAILVVNVDDAKSGIQPQTREHVFLSRTLGISQLAVAINKMDTVNFSEADYNEMKKMLGDQLLKMVGFNPDNITFVPVASLHGDNVFKKSDKTPWYNGPTLAEVIDAFQPPEKPTTLPLRLPIQDVYSITGVGTVPVGRVETGIIKPGDKVIFEPAGAVGEIKTVEMHHEQLPSAEPGDNIGFNVRGVGKKDIKRGDVLGHTTNPPTVAADFTAQIVVLQHPSVMTVGYTPVFHAHTAQIACTFMELQKKLNPATGEVLEENPDFLKAGDAAIVKLMPTKPLVMESVKEIPQLGRFAIRDMGMTVAAGMAIQVTAKNK</sequence>
<protein>
    <recommendedName>
        <fullName evidence="2">Elongation factor 1-alpha</fullName>
        <shortName evidence="2">EF-1-alpha</shortName>
        <ecNumber evidence="2">3.6.5.3</ecNumber>
    </recommendedName>
    <alternativeName>
        <fullName evidence="2">Elongation factor Tu</fullName>
        <shortName evidence="2">EF-Tu</shortName>
    </alternativeName>
</protein>